<organism>
    <name type="scientific">Mannheimia succiniciproducens (strain KCTC 0769BP / MBEL55E)</name>
    <dbReference type="NCBI Taxonomy" id="221988"/>
    <lineage>
        <taxon>Bacteria</taxon>
        <taxon>Pseudomonadati</taxon>
        <taxon>Pseudomonadota</taxon>
        <taxon>Gammaproteobacteria</taxon>
        <taxon>Pasteurellales</taxon>
        <taxon>Pasteurellaceae</taxon>
        <taxon>Basfia</taxon>
    </lineage>
</organism>
<reference key="1">
    <citation type="journal article" date="2004" name="Nat. Biotechnol.">
        <title>The genome sequence of the capnophilic rumen bacterium Mannheimia succiniciproducens.</title>
        <authorList>
            <person name="Hong S.H."/>
            <person name="Kim J.S."/>
            <person name="Lee S.Y."/>
            <person name="In Y.H."/>
            <person name="Choi S.S."/>
            <person name="Rih J.-K."/>
            <person name="Kim C.H."/>
            <person name="Jeong H."/>
            <person name="Hur C.G."/>
            <person name="Kim J.J."/>
        </authorList>
    </citation>
    <scope>NUCLEOTIDE SEQUENCE [LARGE SCALE GENOMIC DNA]</scope>
    <source>
        <strain>KCTC 0769BP / MBEL55E</strain>
    </source>
</reference>
<proteinExistence type="inferred from homology"/>
<gene>
    <name evidence="1" type="primary">proS</name>
    <name type="ordered locus">MS2063</name>
</gene>
<protein>
    <recommendedName>
        <fullName evidence="1">Proline--tRNA ligase</fullName>
        <ecNumber evidence="1">6.1.1.15</ecNumber>
    </recommendedName>
    <alternativeName>
        <fullName evidence="1">Prolyl-tRNA synthetase</fullName>
        <shortName evidence="1">ProRS</shortName>
    </alternativeName>
</protein>
<sequence>MRTSKYLFSTLKETPNDAQVVSHQLMLRAGMIRPMASGLYNWLPSGIRVLEKVKNIIREEMNKSGAIEVLMPVVQPAELWQESGRWEQYGLELLRFNDRGNRDFVLGPTHEEVITDLVRREVSSYKQLPLNLYQIQTKFRDEVRPRFGVMRSREFIMKDAYSFHTTKESLQATYDVMYQTYSNIFTRLGLDFRAVQADTGSIGGSASHEFQVLASSGEDDVVFSTESDYAANIELAEAIAVGERAQPGAAMQLVDTPNAKTIAELVEQFNLPIEKTVKTLIVKGATEEQPLVALIIRGDHDLNEIKAEKLPEVASPFEFADEADIKAKIGAGVGSLGPVNLNIPVIIDRSVALMSDFGAGANIDGKHYFNINWERDVALPKIADLRNVVEGDPSPDGKGTLLIKRGIEVGHIFQLGQKYSEAMNATVQGEDGKPLVMTMGCYGIGVTRVVASAIEQHHDERGIIWPSDAIAPFTVAIVPMNMHKSESVQAYAEELYQTLLAQGVEVIFDDRKERPGVMFADMELIGVPHMVIIGEKNLENGEIEYKNRRTSEKQMIAKDQLLDFLKANVNV</sequence>
<name>SYP_MANSM</name>
<comment type="function">
    <text evidence="1">Catalyzes the attachment of proline to tRNA(Pro) in a two-step reaction: proline is first activated by ATP to form Pro-AMP and then transferred to the acceptor end of tRNA(Pro). As ProRS can inadvertently accommodate and process non-cognate amino acids such as alanine and cysteine, to avoid such errors it has two additional distinct editing activities against alanine. One activity is designated as 'pretransfer' editing and involves the tRNA(Pro)-independent hydrolysis of activated Ala-AMP. The other activity is designated 'posttransfer' editing and involves deacylation of mischarged Ala-tRNA(Pro). The misacylated Cys-tRNA(Pro) is not edited by ProRS.</text>
</comment>
<comment type="catalytic activity">
    <reaction evidence="1">
        <text>tRNA(Pro) + L-proline + ATP = L-prolyl-tRNA(Pro) + AMP + diphosphate</text>
        <dbReference type="Rhea" id="RHEA:14305"/>
        <dbReference type="Rhea" id="RHEA-COMP:9700"/>
        <dbReference type="Rhea" id="RHEA-COMP:9702"/>
        <dbReference type="ChEBI" id="CHEBI:30616"/>
        <dbReference type="ChEBI" id="CHEBI:33019"/>
        <dbReference type="ChEBI" id="CHEBI:60039"/>
        <dbReference type="ChEBI" id="CHEBI:78442"/>
        <dbReference type="ChEBI" id="CHEBI:78532"/>
        <dbReference type="ChEBI" id="CHEBI:456215"/>
        <dbReference type="EC" id="6.1.1.15"/>
    </reaction>
</comment>
<comment type="subunit">
    <text evidence="1">Homodimer.</text>
</comment>
<comment type="subcellular location">
    <subcellularLocation>
        <location evidence="1">Cytoplasm</location>
    </subcellularLocation>
</comment>
<comment type="domain">
    <text evidence="1">Consists of three domains: the N-terminal catalytic domain, the editing domain and the C-terminal anticodon-binding domain.</text>
</comment>
<comment type="similarity">
    <text evidence="1">Belongs to the class-II aminoacyl-tRNA synthetase family. ProS type 1 subfamily.</text>
</comment>
<comment type="sequence caution" evidence="2">
    <conflict type="erroneous initiation">
        <sequence resource="EMBL-CDS" id="AAU38670"/>
    </conflict>
</comment>
<evidence type="ECO:0000255" key="1">
    <source>
        <dbReference type="HAMAP-Rule" id="MF_01569"/>
    </source>
</evidence>
<evidence type="ECO:0000305" key="2"/>
<keyword id="KW-0030">Aminoacyl-tRNA synthetase</keyword>
<keyword id="KW-0067">ATP-binding</keyword>
<keyword id="KW-0963">Cytoplasm</keyword>
<keyword id="KW-0436">Ligase</keyword>
<keyword id="KW-0547">Nucleotide-binding</keyword>
<keyword id="KW-0648">Protein biosynthesis</keyword>
<feature type="chain" id="PRO_0000248721" description="Proline--tRNA ligase">
    <location>
        <begin position="1"/>
        <end position="571"/>
    </location>
</feature>
<accession>Q65QU0</accession>
<dbReference type="EC" id="6.1.1.15" evidence="1"/>
<dbReference type="EMBL" id="AE016827">
    <property type="protein sequence ID" value="AAU38670.1"/>
    <property type="status" value="ALT_INIT"/>
    <property type="molecule type" value="Genomic_DNA"/>
</dbReference>
<dbReference type="RefSeq" id="WP_011201218.1">
    <property type="nucleotide sequence ID" value="NC_006300.1"/>
</dbReference>
<dbReference type="SMR" id="Q65QU0"/>
<dbReference type="STRING" id="221988.MS2063"/>
<dbReference type="KEGG" id="msu:MS2063"/>
<dbReference type="eggNOG" id="COG0442">
    <property type="taxonomic scope" value="Bacteria"/>
</dbReference>
<dbReference type="HOGENOM" id="CLU_016739_0_0_6"/>
<dbReference type="OrthoDB" id="9809052at2"/>
<dbReference type="Proteomes" id="UP000000607">
    <property type="component" value="Chromosome"/>
</dbReference>
<dbReference type="GO" id="GO:0005829">
    <property type="term" value="C:cytosol"/>
    <property type="evidence" value="ECO:0007669"/>
    <property type="project" value="TreeGrafter"/>
</dbReference>
<dbReference type="GO" id="GO:0002161">
    <property type="term" value="F:aminoacyl-tRNA deacylase activity"/>
    <property type="evidence" value="ECO:0007669"/>
    <property type="project" value="InterPro"/>
</dbReference>
<dbReference type="GO" id="GO:0005524">
    <property type="term" value="F:ATP binding"/>
    <property type="evidence" value="ECO:0007669"/>
    <property type="project" value="UniProtKB-UniRule"/>
</dbReference>
<dbReference type="GO" id="GO:0004827">
    <property type="term" value="F:proline-tRNA ligase activity"/>
    <property type="evidence" value="ECO:0007669"/>
    <property type="project" value="UniProtKB-UniRule"/>
</dbReference>
<dbReference type="GO" id="GO:0006433">
    <property type="term" value="P:prolyl-tRNA aminoacylation"/>
    <property type="evidence" value="ECO:0007669"/>
    <property type="project" value="UniProtKB-UniRule"/>
</dbReference>
<dbReference type="CDD" id="cd04334">
    <property type="entry name" value="ProRS-INS"/>
    <property type="match status" value="1"/>
</dbReference>
<dbReference type="CDD" id="cd00861">
    <property type="entry name" value="ProRS_anticodon_short"/>
    <property type="match status" value="1"/>
</dbReference>
<dbReference type="CDD" id="cd00779">
    <property type="entry name" value="ProRS_core_prok"/>
    <property type="match status" value="1"/>
</dbReference>
<dbReference type="FunFam" id="3.30.930.10:FF:000043">
    <property type="entry name" value="Proline--tRNA ligase"/>
    <property type="match status" value="1"/>
</dbReference>
<dbReference type="FunFam" id="3.30.930.10:FF:000097">
    <property type="entry name" value="Proline--tRNA ligase"/>
    <property type="match status" value="1"/>
</dbReference>
<dbReference type="FunFam" id="3.40.50.800:FF:000006">
    <property type="entry name" value="Proline--tRNA ligase"/>
    <property type="match status" value="1"/>
</dbReference>
<dbReference type="FunFam" id="3.90.960.10:FF:000001">
    <property type="entry name" value="Proline--tRNA ligase"/>
    <property type="match status" value="1"/>
</dbReference>
<dbReference type="Gene3D" id="3.40.50.800">
    <property type="entry name" value="Anticodon-binding domain"/>
    <property type="match status" value="1"/>
</dbReference>
<dbReference type="Gene3D" id="3.30.930.10">
    <property type="entry name" value="Bira Bifunctional Protein, Domain 2"/>
    <property type="match status" value="2"/>
</dbReference>
<dbReference type="Gene3D" id="3.90.960.10">
    <property type="entry name" value="YbaK/aminoacyl-tRNA synthetase-associated domain"/>
    <property type="match status" value="1"/>
</dbReference>
<dbReference type="HAMAP" id="MF_01569">
    <property type="entry name" value="Pro_tRNA_synth_type1"/>
    <property type="match status" value="1"/>
</dbReference>
<dbReference type="InterPro" id="IPR002314">
    <property type="entry name" value="aa-tRNA-synt_IIb"/>
</dbReference>
<dbReference type="InterPro" id="IPR006195">
    <property type="entry name" value="aa-tRNA-synth_II"/>
</dbReference>
<dbReference type="InterPro" id="IPR045864">
    <property type="entry name" value="aa-tRNA-synth_II/BPL/LPL"/>
</dbReference>
<dbReference type="InterPro" id="IPR004154">
    <property type="entry name" value="Anticodon-bd"/>
</dbReference>
<dbReference type="InterPro" id="IPR036621">
    <property type="entry name" value="Anticodon-bd_dom_sf"/>
</dbReference>
<dbReference type="InterPro" id="IPR002316">
    <property type="entry name" value="Pro-tRNA-ligase_IIa"/>
</dbReference>
<dbReference type="InterPro" id="IPR004500">
    <property type="entry name" value="Pro-tRNA-synth_IIa_bac-type"/>
</dbReference>
<dbReference type="InterPro" id="IPR023717">
    <property type="entry name" value="Pro-tRNA-Synthase_IIa_type1"/>
</dbReference>
<dbReference type="InterPro" id="IPR050062">
    <property type="entry name" value="Pro-tRNA_synthetase"/>
</dbReference>
<dbReference type="InterPro" id="IPR044140">
    <property type="entry name" value="ProRS_anticodon_short"/>
</dbReference>
<dbReference type="InterPro" id="IPR033730">
    <property type="entry name" value="ProRS_core_prok"/>
</dbReference>
<dbReference type="InterPro" id="IPR036754">
    <property type="entry name" value="YbaK/aa-tRNA-synt-asso_dom_sf"/>
</dbReference>
<dbReference type="InterPro" id="IPR007214">
    <property type="entry name" value="YbaK/aa-tRNA-synth-assoc-dom"/>
</dbReference>
<dbReference type="NCBIfam" id="NF006625">
    <property type="entry name" value="PRK09194.1"/>
    <property type="match status" value="1"/>
</dbReference>
<dbReference type="NCBIfam" id="TIGR00409">
    <property type="entry name" value="proS_fam_II"/>
    <property type="match status" value="1"/>
</dbReference>
<dbReference type="PANTHER" id="PTHR42753">
    <property type="entry name" value="MITOCHONDRIAL RIBOSOME PROTEIN L39/PROLYL-TRNA LIGASE FAMILY MEMBER"/>
    <property type="match status" value="1"/>
</dbReference>
<dbReference type="PANTHER" id="PTHR42753:SF2">
    <property type="entry name" value="PROLINE--TRNA LIGASE"/>
    <property type="match status" value="1"/>
</dbReference>
<dbReference type="Pfam" id="PF03129">
    <property type="entry name" value="HGTP_anticodon"/>
    <property type="match status" value="1"/>
</dbReference>
<dbReference type="Pfam" id="PF00587">
    <property type="entry name" value="tRNA-synt_2b"/>
    <property type="match status" value="1"/>
</dbReference>
<dbReference type="Pfam" id="PF04073">
    <property type="entry name" value="tRNA_edit"/>
    <property type="match status" value="1"/>
</dbReference>
<dbReference type="PIRSF" id="PIRSF001535">
    <property type="entry name" value="ProRS_1"/>
    <property type="match status" value="1"/>
</dbReference>
<dbReference type="PRINTS" id="PR01046">
    <property type="entry name" value="TRNASYNTHPRO"/>
</dbReference>
<dbReference type="SUPFAM" id="SSF52954">
    <property type="entry name" value="Class II aaRS ABD-related"/>
    <property type="match status" value="1"/>
</dbReference>
<dbReference type="SUPFAM" id="SSF55681">
    <property type="entry name" value="Class II aaRS and biotin synthetases"/>
    <property type="match status" value="1"/>
</dbReference>
<dbReference type="SUPFAM" id="SSF55826">
    <property type="entry name" value="YbaK/ProRS associated domain"/>
    <property type="match status" value="1"/>
</dbReference>
<dbReference type="PROSITE" id="PS50862">
    <property type="entry name" value="AA_TRNA_LIGASE_II"/>
    <property type="match status" value="1"/>
</dbReference>